<organism>
    <name type="scientific">Francisella tularensis subsp. tularensis (strain WY96-3418)</name>
    <dbReference type="NCBI Taxonomy" id="418136"/>
    <lineage>
        <taxon>Bacteria</taxon>
        <taxon>Pseudomonadati</taxon>
        <taxon>Pseudomonadota</taxon>
        <taxon>Gammaproteobacteria</taxon>
        <taxon>Thiotrichales</taxon>
        <taxon>Francisellaceae</taxon>
        <taxon>Francisella</taxon>
    </lineage>
</organism>
<evidence type="ECO:0000255" key="1">
    <source>
        <dbReference type="HAMAP-Rule" id="MF_00110"/>
    </source>
</evidence>
<feature type="chain" id="PRO_1000094523" description="3-dehydroquinate synthase">
    <location>
        <begin position="1"/>
        <end position="359"/>
    </location>
</feature>
<feature type="binding site" evidence="1">
    <location>
        <begin position="70"/>
        <end position="75"/>
    </location>
    <ligand>
        <name>NAD(+)</name>
        <dbReference type="ChEBI" id="CHEBI:57540"/>
    </ligand>
</feature>
<feature type="binding site" evidence="1">
    <location>
        <begin position="105"/>
        <end position="109"/>
    </location>
    <ligand>
        <name>NAD(+)</name>
        <dbReference type="ChEBI" id="CHEBI:57540"/>
    </ligand>
</feature>
<feature type="binding site" evidence="1">
    <location>
        <begin position="129"/>
        <end position="130"/>
    </location>
    <ligand>
        <name>NAD(+)</name>
        <dbReference type="ChEBI" id="CHEBI:57540"/>
    </ligand>
</feature>
<feature type="binding site" evidence="1">
    <location>
        <position position="142"/>
    </location>
    <ligand>
        <name>NAD(+)</name>
        <dbReference type="ChEBI" id="CHEBI:57540"/>
    </ligand>
</feature>
<feature type="binding site" evidence="1">
    <location>
        <position position="151"/>
    </location>
    <ligand>
        <name>NAD(+)</name>
        <dbReference type="ChEBI" id="CHEBI:57540"/>
    </ligand>
</feature>
<feature type="binding site" evidence="1">
    <location>
        <begin position="169"/>
        <end position="172"/>
    </location>
    <ligand>
        <name>NAD(+)</name>
        <dbReference type="ChEBI" id="CHEBI:57540"/>
    </ligand>
</feature>
<feature type="binding site" evidence="1">
    <location>
        <position position="184"/>
    </location>
    <ligand>
        <name>Zn(2+)</name>
        <dbReference type="ChEBI" id="CHEBI:29105"/>
    </ligand>
</feature>
<feature type="binding site" evidence="1">
    <location>
        <position position="247"/>
    </location>
    <ligand>
        <name>Zn(2+)</name>
        <dbReference type="ChEBI" id="CHEBI:29105"/>
    </ligand>
</feature>
<feature type="binding site" evidence="1">
    <location>
        <position position="264"/>
    </location>
    <ligand>
        <name>Zn(2+)</name>
        <dbReference type="ChEBI" id="CHEBI:29105"/>
    </ligand>
</feature>
<name>AROB_FRATW</name>
<gene>
    <name evidence="1" type="primary">aroB</name>
    <name type="ordered locus">FTW_1193</name>
</gene>
<protein>
    <recommendedName>
        <fullName evidence="1">3-dehydroquinate synthase</fullName>
        <shortName evidence="1">DHQS</shortName>
        <ecNumber evidence="1">4.2.3.4</ecNumber>
    </recommendedName>
</protein>
<sequence length="359" mass="40146">MISKLSVNPTFSPSYNIIVDSVLDFSHILEYVTNKQVLVVTNTTVAKLYLTKFLAALVDDLDVRTCILEDGEQYKSQQSLDKILSTLLENHFTRNSTVLVALGGGVIGDITGFAAAIYQRGIDFIQIPTTLLSQVDSSVGGKTAINHQLGKNMIGAFYQPKVVYTSIEFYKTLSQREYIAGMAEVVKYAFISKDFYLWLDSNRDKILAKDSVTLIEMVKRSCQIKAQVVAMDEKELTGARAILNFGHTFGHAIEKCQNYRGLKHGEAVGVGMAQAIDFSHYLGLISQQQAKDFNDFIVSFGISIDFPNDICQKEFLEAMLLDKKNSNKELKFILIENIGSLSLQKQSKNELEQFLDISR</sequence>
<comment type="function">
    <text evidence="1">Catalyzes the conversion of 3-deoxy-D-arabino-heptulosonate 7-phosphate (DAHP) to dehydroquinate (DHQ).</text>
</comment>
<comment type="catalytic activity">
    <reaction evidence="1">
        <text>7-phospho-2-dehydro-3-deoxy-D-arabino-heptonate = 3-dehydroquinate + phosphate</text>
        <dbReference type="Rhea" id="RHEA:21968"/>
        <dbReference type="ChEBI" id="CHEBI:32364"/>
        <dbReference type="ChEBI" id="CHEBI:43474"/>
        <dbReference type="ChEBI" id="CHEBI:58394"/>
        <dbReference type="EC" id="4.2.3.4"/>
    </reaction>
</comment>
<comment type="cofactor">
    <cofactor evidence="1">
        <name>Co(2+)</name>
        <dbReference type="ChEBI" id="CHEBI:48828"/>
    </cofactor>
    <cofactor evidence="1">
        <name>Zn(2+)</name>
        <dbReference type="ChEBI" id="CHEBI:29105"/>
    </cofactor>
    <text evidence="1">Binds 1 divalent metal cation per subunit. Can use either Co(2+) or Zn(2+).</text>
</comment>
<comment type="cofactor">
    <cofactor evidence="1">
        <name>NAD(+)</name>
        <dbReference type="ChEBI" id="CHEBI:57540"/>
    </cofactor>
</comment>
<comment type="pathway">
    <text evidence="1">Metabolic intermediate biosynthesis; chorismate biosynthesis; chorismate from D-erythrose 4-phosphate and phosphoenolpyruvate: step 2/7.</text>
</comment>
<comment type="subcellular location">
    <subcellularLocation>
        <location evidence="1">Cytoplasm</location>
    </subcellularLocation>
</comment>
<comment type="similarity">
    <text evidence="1">Belongs to the sugar phosphate cyclases superfamily. Dehydroquinate synthase family.</text>
</comment>
<accession>A4IYI9</accession>
<keyword id="KW-0028">Amino-acid biosynthesis</keyword>
<keyword id="KW-0057">Aromatic amino acid biosynthesis</keyword>
<keyword id="KW-0170">Cobalt</keyword>
<keyword id="KW-0963">Cytoplasm</keyword>
<keyword id="KW-0456">Lyase</keyword>
<keyword id="KW-0479">Metal-binding</keyword>
<keyword id="KW-0520">NAD</keyword>
<keyword id="KW-0547">Nucleotide-binding</keyword>
<keyword id="KW-0862">Zinc</keyword>
<proteinExistence type="inferred from homology"/>
<dbReference type="EC" id="4.2.3.4" evidence="1"/>
<dbReference type="EMBL" id="CP000608">
    <property type="protein sequence ID" value="ABO46990.1"/>
    <property type="molecule type" value="Genomic_DNA"/>
</dbReference>
<dbReference type="RefSeq" id="WP_003026412.1">
    <property type="nucleotide sequence ID" value="NC_009257.1"/>
</dbReference>
<dbReference type="SMR" id="A4IYI9"/>
<dbReference type="KEGG" id="ftw:FTW_1193"/>
<dbReference type="HOGENOM" id="CLU_001201_0_2_6"/>
<dbReference type="UniPathway" id="UPA00053">
    <property type="reaction ID" value="UER00085"/>
</dbReference>
<dbReference type="GO" id="GO:0005737">
    <property type="term" value="C:cytoplasm"/>
    <property type="evidence" value="ECO:0007669"/>
    <property type="project" value="UniProtKB-SubCell"/>
</dbReference>
<dbReference type="GO" id="GO:0003856">
    <property type="term" value="F:3-dehydroquinate synthase activity"/>
    <property type="evidence" value="ECO:0007669"/>
    <property type="project" value="UniProtKB-UniRule"/>
</dbReference>
<dbReference type="GO" id="GO:0046872">
    <property type="term" value="F:metal ion binding"/>
    <property type="evidence" value="ECO:0007669"/>
    <property type="project" value="UniProtKB-KW"/>
</dbReference>
<dbReference type="GO" id="GO:0000166">
    <property type="term" value="F:nucleotide binding"/>
    <property type="evidence" value="ECO:0007669"/>
    <property type="project" value="UniProtKB-KW"/>
</dbReference>
<dbReference type="GO" id="GO:0008652">
    <property type="term" value="P:amino acid biosynthetic process"/>
    <property type="evidence" value="ECO:0007669"/>
    <property type="project" value="UniProtKB-KW"/>
</dbReference>
<dbReference type="GO" id="GO:0009073">
    <property type="term" value="P:aromatic amino acid family biosynthetic process"/>
    <property type="evidence" value="ECO:0007669"/>
    <property type="project" value="UniProtKB-KW"/>
</dbReference>
<dbReference type="GO" id="GO:0009423">
    <property type="term" value="P:chorismate biosynthetic process"/>
    <property type="evidence" value="ECO:0007669"/>
    <property type="project" value="UniProtKB-UniRule"/>
</dbReference>
<dbReference type="CDD" id="cd08195">
    <property type="entry name" value="DHQS"/>
    <property type="match status" value="1"/>
</dbReference>
<dbReference type="FunFam" id="3.40.50.1970:FF:000001">
    <property type="entry name" value="3-dehydroquinate synthase"/>
    <property type="match status" value="1"/>
</dbReference>
<dbReference type="Gene3D" id="3.40.50.1970">
    <property type="match status" value="1"/>
</dbReference>
<dbReference type="Gene3D" id="1.20.1090.10">
    <property type="entry name" value="Dehydroquinate synthase-like - alpha domain"/>
    <property type="match status" value="1"/>
</dbReference>
<dbReference type="HAMAP" id="MF_00110">
    <property type="entry name" value="DHQ_synthase"/>
    <property type="match status" value="1"/>
</dbReference>
<dbReference type="InterPro" id="IPR050071">
    <property type="entry name" value="Dehydroquinate_synthase"/>
</dbReference>
<dbReference type="InterPro" id="IPR016037">
    <property type="entry name" value="DHQ_synth_AroB"/>
</dbReference>
<dbReference type="InterPro" id="IPR030963">
    <property type="entry name" value="DHQ_synth_fam"/>
</dbReference>
<dbReference type="InterPro" id="IPR030960">
    <property type="entry name" value="DHQS/DOIS_N"/>
</dbReference>
<dbReference type="InterPro" id="IPR056179">
    <property type="entry name" value="DHQS_C"/>
</dbReference>
<dbReference type="NCBIfam" id="TIGR01357">
    <property type="entry name" value="aroB"/>
    <property type="match status" value="1"/>
</dbReference>
<dbReference type="PANTHER" id="PTHR43622">
    <property type="entry name" value="3-DEHYDROQUINATE SYNTHASE"/>
    <property type="match status" value="1"/>
</dbReference>
<dbReference type="PANTHER" id="PTHR43622:SF7">
    <property type="entry name" value="3-DEHYDROQUINATE SYNTHASE, CHLOROPLASTIC"/>
    <property type="match status" value="1"/>
</dbReference>
<dbReference type="Pfam" id="PF01761">
    <property type="entry name" value="DHQ_synthase"/>
    <property type="match status" value="1"/>
</dbReference>
<dbReference type="Pfam" id="PF24621">
    <property type="entry name" value="DHQS_C"/>
    <property type="match status" value="1"/>
</dbReference>
<dbReference type="PIRSF" id="PIRSF001455">
    <property type="entry name" value="DHQ_synth"/>
    <property type="match status" value="1"/>
</dbReference>
<dbReference type="SUPFAM" id="SSF56796">
    <property type="entry name" value="Dehydroquinate synthase-like"/>
    <property type="match status" value="1"/>
</dbReference>
<reference key="1">
    <citation type="journal article" date="2007" name="PLoS ONE">
        <title>Complete genomic characterization of a pathogenic A.II strain of Francisella tularensis subspecies tularensis.</title>
        <authorList>
            <person name="Beckstrom-Sternberg S.M."/>
            <person name="Auerbach R.K."/>
            <person name="Godbole S."/>
            <person name="Pearson J.V."/>
            <person name="Beckstrom-Sternberg J.S."/>
            <person name="Deng Z."/>
            <person name="Munk C."/>
            <person name="Kubota K."/>
            <person name="Zhou Y."/>
            <person name="Bruce D."/>
            <person name="Noronha J."/>
            <person name="Scheuermann R.H."/>
            <person name="Wang A."/>
            <person name="Wei X."/>
            <person name="Wang J."/>
            <person name="Hao J."/>
            <person name="Wagner D.M."/>
            <person name="Brettin T.S."/>
            <person name="Brown N."/>
            <person name="Gilna P."/>
            <person name="Keim P.S."/>
        </authorList>
    </citation>
    <scope>NUCLEOTIDE SEQUENCE [LARGE SCALE GENOMIC DNA]</scope>
    <source>
        <strain>WY96-3418</strain>
    </source>
</reference>